<dbReference type="EMBL" id="BC068689">
    <property type="protein sequence ID" value="AAH68689.1"/>
    <property type="molecule type" value="mRNA"/>
</dbReference>
<dbReference type="RefSeq" id="NP_001084696.1">
    <property type="nucleotide sequence ID" value="NM_001091227.1"/>
</dbReference>
<dbReference type="SMR" id="Q6NUA7"/>
<dbReference type="GlyCosmos" id="Q6NUA7">
    <property type="glycosylation" value="4 sites, No reported glycans"/>
</dbReference>
<dbReference type="DNASU" id="414657"/>
<dbReference type="GeneID" id="414657"/>
<dbReference type="KEGG" id="xla:414657"/>
<dbReference type="AGR" id="Xenbase:XB-GENE-5898543"/>
<dbReference type="CTD" id="414657"/>
<dbReference type="Xenbase" id="XB-GENE-5898543">
    <property type="gene designation" value="sil1.L"/>
</dbReference>
<dbReference type="OrthoDB" id="448649at2759"/>
<dbReference type="Proteomes" id="UP000186698">
    <property type="component" value="Chromosome 8L"/>
</dbReference>
<dbReference type="Bgee" id="414657">
    <property type="expression patterns" value="Expressed in pancreas and 19 other cell types or tissues"/>
</dbReference>
<dbReference type="GO" id="GO:0005783">
    <property type="term" value="C:endoplasmic reticulum"/>
    <property type="evidence" value="ECO:0000318"/>
    <property type="project" value="GO_Central"/>
</dbReference>
<dbReference type="GO" id="GO:0005788">
    <property type="term" value="C:endoplasmic reticulum lumen"/>
    <property type="evidence" value="ECO:0007669"/>
    <property type="project" value="UniProtKB-SubCell"/>
</dbReference>
<dbReference type="GO" id="GO:0000774">
    <property type="term" value="F:adenyl-nucleotide exchange factor activity"/>
    <property type="evidence" value="ECO:0000318"/>
    <property type="project" value="GO_Central"/>
</dbReference>
<dbReference type="GO" id="GO:0015031">
    <property type="term" value="P:protein transport"/>
    <property type="evidence" value="ECO:0007669"/>
    <property type="project" value="UniProtKB-KW"/>
</dbReference>
<dbReference type="FunFam" id="1.25.10.10:FF:000148">
    <property type="entry name" value="SIL1 nucleotide exchange factor"/>
    <property type="match status" value="1"/>
</dbReference>
<dbReference type="Gene3D" id="1.25.10.10">
    <property type="entry name" value="Leucine-rich Repeat Variant"/>
    <property type="match status" value="1"/>
</dbReference>
<dbReference type="InterPro" id="IPR011989">
    <property type="entry name" value="ARM-like"/>
</dbReference>
<dbReference type="InterPro" id="IPR016024">
    <property type="entry name" value="ARM-type_fold"/>
</dbReference>
<dbReference type="InterPro" id="IPR050693">
    <property type="entry name" value="Hsp70_NEF-Inhibitors"/>
</dbReference>
<dbReference type="PANTHER" id="PTHR19316:SF35">
    <property type="entry name" value="NUCLEOTIDE EXCHANGE FACTOR SIL1"/>
    <property type="match status" value="1"/>
</dbReference>
<dbReference type="PANTHER" id="PTHR19316">
    <property type="entry name" value="PROTEIN FOLDING REGULATOR"/>
    <property type="match status" value="1"/>
</dbReference>
<dbReference type="SUPFAM" id="SSF48371">
    <property type="entry name" value="ARM repeat"/>
    <property type="match status" value="1"/>
</dbReference>
<organism>
    <name type="scientific">Xenopus laevis</name>
    <name type="common">African clawed frog</name>
    <dbReference type="NCBI Taxonomy" id="8355"/>
    <lineage>
        <taxon>Eukaryota</taxon>
        <taxon>Metazoa</taxon>
        <taxon>Chordata</taxon>
        <taxon>Craniata</taxon>
        <taxon>Vertebrata</taxon>
        <taxon>Euteleostomi</taxon>
        <taxon>Amphibia</taxon>
        <taxon>Batrachia</taxon>
        <taxon>Anura</taxon>
        <taxon>Pipoidea</taxon>
        <taxon>Pipidae</taxon>
        <taxon>Xenopodinae</taxon>
        <taxon>Xenopus</taxon>
        <taxon>Xenopus</taxon>
    </lineage>
</organism>
<comment type="function">
    <text evidence="1">Required for protein translocation and folding in the endoplasmic reticulum (ER). Functions as a nucleotide exchange factor for the ER lumenal chaperone HSPA5.</text>
</comment>
<comment type="subcellular location">
    <subcellularLocation>
        <location evidence="1">Endoplasmic reticulum lumen</location>
    </subcellularLocation>
</comment>
<comment type="similarity">
    <text evidence="4">Belongs to the SIL1 family.</text>
</comment>
<accession>Q6NUA7</accession>
<gene>
    <name type="primary">sil1</name>
</gene>
<reference key="1">
    <citation type="submission" date="2004-04" db="EMBL/GenBank/DDBJ databases">
        <authorList>
            <consortium name="NIH - Xenopus Gene Collection (XGC) project"/>
        </authorList>
    </citation>
    <scope>NUCLEOTIDE SEQUENCE [LARGE SCALE MRNA]</scope>
    <source>
        <tissue>Ovary</tissue>
    </source>
</reference>
<keyword id="KW-0256">Endoplasmic reticulum</keyword>
<keyword id="KW-0325">Glycoprotein</keyword>
<keyword id="KW-0653">Protein transport</keyword>
<keyword id="KW-1185">Reference proteome</keyword>
<keyword id="KW-0732">Signal</keyword>
<keyword id="KW-0811">Translocation</keyword>
<keyword id="KW-0813">Transport</keyword>
<protein>
    <recommendedName>
        <fullName>Nucleotide exchange factor SIL1</fullName>
    </recommendedName>
</protein>
<evidence type="ECO:0000250" key="1">
    <source>
        <dbReference type="UniProtKB" id="Q9H173"/>
    </source>
</evidence>
<evidence type="ECO:0000255" key="2"/>
<evidence type="ECO:0000256" key="3">
    <source>
        <dbReference type="SAM" id="MobiDB-lite"/>
    </source>
</evidence>
<evidence type="ECO:0000305" key="4"/>
<sequence>MDLYCSFIRISNHVKMSTFILLTLCFYVALSDRSPEYALTKVTEAEDDGNVEAIVENEPDPEDQEIFYPTREWQVVKPGQAVPAGLHMRLNLQTGKNEAKLLEEKEGKDRPKQKRKSSTTSDKYTKKELKEALTKFKEGAEQLSPAEEKDYLQDIKQRFRPIEDLQKAFNDLNINVETDFEIMTKIVNRFNSSSSTTEKVSALYDLEYYVHQVDNAQNLLKLGALQLLINSLNSTDTLLIENSAFVIGSALSSNPKVQIEAFEAGALQKLLVILAADQEVSVKKKTLYALSSMLRQFPYAQQRFMKLGGLQILKNFFKEKNAESLYIRVITLLYDMIMEKMLLYKENNTEQYEQKYQQYNQINLLESITEQGWCPIISDLLRLPENDSREKVLKAVLTLIPLCRAEFLKDCNLLTLLNSLRKEYEGLAAEELRSGEQDGYFSEILSLTISITDKLK</sequence>
<name>SIL1_XENLA</name>
<proteinExistence type="evidence at transcript level"/>
<feature type="signal peptide" evidence="2">
    <location>
        <begin position="1"/>
        <end position="31"/>
    </location>
</feature>
<feature type="chain" id="PRO_0000223357" description="Nucleotide exchange factor SIL1">
    <location>
        <begin position="32"/>
        <end position="456"/>
    </location>
</feature>
<feature type="region of interest" description="Disordered" evidence="3">
    <location>
        <begin position="102"/>
        <end position="124"/>
    </location>
</feature>
<feature type="glycosylation site" description="N-linked (GlcNAc...) asparagine" evidence="2">
    <location>
        <position position="191"/>
    </location>
</feature>
<feature type="glycosylation site" description="N-linked (GlcNAc...) asparagine" evidence="2">
    <location>
        <position position="233"/>
    </location>
</feature>
<feature type="glycosylation site" description="N-linked (GlcNAc...) asparagine" evidence="2">
    <location>
        <position position="347"/>
    </location>
</feature>
<feature type="glycosylation site" description="N-linked (GlcNAc...) asparagine" evidence="2">
    <location>
        <position position="386"/>
    </location>
</feature>